<comment type="function">
    <text evidence="1">Catalyzes the reversible formation of acyl-phosphate (acyl-PO(4)) from acyl-[acyl-carrier-protein] (acyl-ACP). This enzyme utilizes acyl-ACP as fatty acyl donor, but not acyl-CoA.</text>
</comment>
<comment type="catalytic activity">
    <reaction evidence="1">
        <text>a fatty acyl-[ACP] + phosphate = an acyl phosphate + holo-[ACP]</text>
        <dbReference type="Rhea" id="RHEA:42292"/>
        <dbReference type="Rhea" id="RHEA-COMP:9685"/>
        <dbReference type="Rhea" id="RHEA-COMP:14125"/>
        <dbReference type="ChEBI" id="CHEBI:43474"/>
        <dbReference type="ChEBI" id="CHEBI:59918"/>
        <dbReference type="ChEBI" id="CHEBI:64479"/>
        <dbReference type="ChEBI" id="CHEBI:138651"/>
        <dbReference type="EC" id="2.3.1.274"/>
    </reaction>
</comment>
<comment type="pathway">
    <text evidence="1">Lipid metabolism; phospholipid metabolism.</text>
</comment>
<comment type="subunit">
    <text evidence="1">Homodimer. Probably interacts with PlsY.</text>
</comment>
<comment type="subcellular location">
    <subcellularLocation>
        <location evidence="1">Cytoplasm</location>
    </subcellularLocation>
    <text evidence="1">Associated with the membrane possibly through PlsY.</text>
</comment>
<comment type="similarity">
    <text evidence="1">Belongs to the PlsX family.</text>
</comment>
<comment type="sequence caution" evidence="2">
    <conflict type="erroneous initiation">
        <sequence resource="EMBL-CDS" id="AAG06357"/>
    </conflict>
</comment>
<keyword id="KW-0963">Cytoplasm</keyword>
<keyword id="KW-0444">Lipid biosynthesis</keyword>
<keyword id="KW-0443">Lipid metabolism</keyword>
<keyword id="KW-0594">Phospholipid biosynthesis</keyword>
<keyword id="KW-1208">Phospholipid metabolism</keyword>
<keyword id="KW-1185">Reference proteome</keyword>
<keyword id="KW-0808">Transferase</keyword>
<reference key="1">
    <citation type="journal article" date="2000" name="Nature">
        <title>Complete genome sequence of Pseudomonas aeruginosa PAO1, an opportunistic pathogen.</title>
        <authorList>
            <person name="Stover C.K."/>
            <person name="Pham X.-Q.T."/>
            <person name="Erwin A.L."/>
            <person name="Mizoguchi S.D."/>
            <person name="Warrener P."/>
            <person name="Hickey M.J."/>
            <person name="Brinkman F.S.L."/>
            <person name="Hufnagle W.O."/>
            <person name="Kowalik D.J."/>
            <person name="Lagrou M."/>
            <person name="Garber R.L."/>
            <person name="Goltry L."/>
            <person name="Tolentino E."/>
            <person name="Westbrock-Wadman S."/>
            <person name="Yuan Y."/>
            <person name="Brody L.L."/>
            <person name="Coulter S.N."/>
            <person name="Folger K.R."/>
            <person name="Kas A."/>
            <person name="Larbig K."/>
            <person name="Lim R.M."/>
            <person name="Smith K.A."/>
            <person name="Spencer D.H."/>
            <person name="Wong G.K.-S."/>
            <person name="Wu Z."/>
            <person name="Paulsen I.T."/>
            <person name="Reizer J."/>
            <person name="Saier M.H. Jr."/>
            <person name="Hancock R.E.W."/>
            <person name="Lory S."/>
            <person name="Olson M.V."/>
        </authorList>
    </citation>
    <scope>NUCLEOTIDE SEQUENCE [LARGE SCALE GENOMIC DNA]</scope>
    <source>
        <strain>ATCC 15692 / DSM 22644 / CIP 104116 / JCM 14847 / LMG 12228 / 1C / PRS 101 / PAO1</strain>
    </source>
</reference>
<dbReference type="EC" id="2.3.1.274" evidence="1"/>
<dbReference type="EMBL" id="AE004091">
    <property type="protein sequence ID" value="AAG06357.1"/>
    <property type="status" value="ALT_INIT"/>
    <property type="molecule type" value="Genomic_DNA"/>
</dbReference>
<dbReference type="PIR" id="A83273">
    <property type="entry name" value="A83273"/>
</dbReference>
<dbReference type="RefSeq" id="NP_251659.1">
    <property type="nucleotide sequence ID" value="NC_002516.2"/>
</dbReference>
<dbReference type="RefSeq" id="WP_071533934.1">
    <property type="nucleotide sequence ID" value="NZ_CP129519.1"/>
</dbReference>
<dbReference type="SMR" id="Q9HZN5"/>
<dbReference type="FunCoup" id="Q9HZN5">
    <property type="interactions" value="378"/>
</dbReference>
<dbReference type="STRING" id="208964.PA2969"/>
<dbReference type="PaxDb" id="208964-PA2969"/>
<dbReference type="GeneID" id="880143"/>
<dbReference type="KEGG" id="pae:PA2969"/>
<dbReference type="PATRIC" id="fig|208964.12.peg.3115"/>
<dbReference type="PseudoCAP" id="PA2969"/>
<dbReference type="HOGENOM" id="CLU_039379_1_0_6"/>
<dbReference type="InParanoid" id="Q9HZN5"/>
<dbReference type="OrthoDB" id="9806408at2"/>
<dbReference type="PhylomeDB" id="Q9HZN5"/>
<dbReference type="UniPathway" id="UPA00085"/>
<dbReference type="Proteomes" id="UP000002438">
    <property type="component" value="Chromosome"/>
</dbReference>
<dbReference type="GO" id="GO:0005737">
    <property type="term" value="C:cytoplasm"/>
    <property type="evidence" value="ECO:0007669"/>
    <property type="project" value="UniProtKB-SubCell"/>
</dbReference>
<dbReference type="GO" id="GO:0043811">
    <property type="term" value="F:phosphate:acyl-[acyl carrier protein] acyltransferase activity"/>
    <property type="evidence" value="ECO:0007669"/>
    <property type="project" value="UniProtKB-UniRule"/>
</dbReference>
<dbReference type="GO" id="GO:0006633">
    <property type="term" value="P:fatty acid biosynthetic process"/>
    <property type="evidence" value="ECO:0007669"/>
    <property type="project" value="UniProtKB-UniRule"/>
</dbReference>
<dbReference type="GO" id="GO:0008654">
    <property type="term" value="P:phospholipid biosynthetic process"/>
    <property type="evidence" value="ECO:0007669"/>
    <property type="project" value="UniProtKB-KW"/>
</dbReference>
<dbReference type="Gene3D" id="3.40.718.10">
    <property type="entry name" value="Isopropylmalate Dehydrogenase"/>
    <property type="match status" value="1"/>
</dbReference>
<dbReference type="HAMAP" id="MF_00019">
    <property type="entry name" value="PlsX"/>
    <property type="match status" value="1"/>
</dbReference>
<dbReference type="InterPro" id="IPR003664">
    <property type="entry name" value="FA_synthesis"/>
</dbReference>
<dbReference type="InterPro" id="IPR012281">
    <property type="entry name" value="Phospholipid_synth_PlsX-like"/>
</dbReference>
<dbReference type="NCBIfam" id="TIGR00182">
    <property type="entry name" value="plsX"/>
    <property type="match status" value="1"/>
</dbReference>
<dbReference type="PANTHER" id="PTHR30100">
    <property type="entry name" value="FATTY ACID/PHOSPHOLIPID SYNTHESIS PROTEIN PLSX"/>
    <property type="match status" value="1"/>
</dbReference>
<dbReference type="PANTHER" id="PTHR30100:SF1">
    <property type="entry name" value="PHOSPHATE ACYLTRANSFERASE"/>
    <property type="match status" value="1"/>
</dbReference>
<dbReference type="Pfam" id="PF02504">
    <property type="entry name" value="FA_synthesis"/>
    <property type="match status" value="1"/>
</dbReference>
<dbReference type="PIRSF" id="PIRSF002465">
    <property type="entry name" value="Phsphlp_syn_PlsX"/>
    <property type="match status" value="1"/>
</dbReference>
<dbReference type="SUPFAM" id="SSF53659">
    <property type="entry name" value="Isocitrate/Isopropylmalate dehydrogenase-like"/>
    <property type="match status" value="1"/>
</dbReference>
<proteinExistence type="inferred from homology"/>
<accession>Q9HZN5</accession>
<sequence>MSAPIIAIDAMGGDFGPHCVVPASIAFLAENSSSQLILVGQPALLEELLSRYPSLDRQRLRVHAASEVIGSDERPSQALRGKPDASMRVALELVRDGRAHACVSAGNTGALMALSRHLLKTLPGIDRPAMVTAVPTEKGHCHLLDLGANVDCSAEHLYQFAVMGAVAAEALGCVSPRVALLNVGTEEIKGNQQVKLAASLLQKAQGLNFSGYIEGDGLYRGEADVVVCDGFVGNILLKASEGLAAMVSARIEQRFRDGLAAKLVGALALPLLRRLRGDIAPARYNGASFLGLQGIVVKSHGSAAEEGFQSALRRAALEVRENLPQRLHGRLEHLLL</sequence>
<feature type="chain" id="PRO_0000189922" description="Phosphate acyltransferase">
    <location>
        <begin position="1"/>
        <end position="336"/>
    </location>
</feature>
<name>PLSX_PSEAE</name>
<gene>
    <name evidence="1" type="primary">plsX</name>
    <name type="ordered locus">PA2969</name>
</gene>
<evidence type="ECO:0000255" key="1">
    <source>
        <dbReference type="HAMAP-Rule" id="MF_00019"/>
    </source>
</evidence>
<evidence type="ECO:0000305" key="2"/>
<organism>
    <name type="scientific">Pseudomonas aeruginosa (strain ATCC 15692 / DSM 22644 / CIP 104116 / JCM 14847 / LMG 12228 / 1C / PRS 101 / PAO1)</name>
    <dbReference type="NCBI Taxonomy" id="208964"/>
    <lineage>
        <taxon>Bacteria</taxon>
        <taxon>Pseudomonadati</taxon>
        <taxon>Pseudomonadota</taxon>
        <taxon>Gammaproteobacteria</taxon>
        <taxon>Pseudomonadales</taxon>
        <taxon>Pseudomonadaceae</taxon>
        <taxon>Pseudomonas</taxon>
    </lineage>
</organism>
<protein>
    <recommendedName>
        <fullName evidence="1">Phosphate acyltransferase</fullName>
        <ecNumber evidence="1">2.3.1.274</ecNumber>
    </recommendedName>
    <alternativeName>
        <fullName evidence="1">Acyl-ACP phosphotransacylase</fullName>
    </alternativeName>
    <alternativeName>
        <fullName evidence="1">Acyl-[acyl-carrier-protein]--phosphate acyltransferase</fullName>
    </alternativeName>
    <alternativeName>
        <fullName evidence="1">Phosphate-acyl-ACP acyltransferase</fullName>
    </alternativeName>
</protein>